<organism>
    <name type="scientific">Bacteroides thetaiotaomicron (strain ATCC 29148 / DSM 2079 / JCM 5827 / CCUG 10774 / NCTC 10582 / VPI-5482 / E50)</name>
    <dbReference type="NCBI Taxonomy" id="226186"/>
    <lineage>
        <taxon>Bacteria</taxon>
        <taxon>Pseudomonadati</taxon>
        <taxon>Bacteroidota</taxon>
        <taxon>Bacteroidia</taxon>
        <taxon>Bacteroidales</taxon>
        <taxon>Bacteroidaceae</taxon>
        <taxon>Bacteroides</taxon>
    </lineage>
</organism>
<feature type="chain" id="PRO_0000180105" description="Acyl carrier protein">
    <location>
        <begin position="1"/>
        <end position="78"/>
    </location>
</feature>
<feature type="domain" description="Carrier" evidence="2">
    <location>
        <begin position="2"/>
        <end position="77"/>
    </location>
</feature>
<feature type="modified residue" description="O-(pantetheine 4'-phosphoryl)serine" evidence="2">
    <location>
        <position position="37"/>
    </location>
</feature>
<comment type="function">
    <text evidence="1">Carrier of the growing fatty acid chain in fatty acid biosynthesis.</text>
</comment>
<comment type="pathway">
    <text evidence="1">Lipid metabolism; fatty acid biosynthesis.</text>
</comment>
<comment type="subcellular location">
    <subcellularLocation>
        <location evidence="1">Cytoplasm</location>
    </subcellularLocation>
</comment>
<comment type="PTM">
    <text evidence="1">4'-phosphopantetheine is transferred from CoA to a specific serine of apo-ACP by AcpS. This modification is essential for activity because fatty acids are bound in thioester linkage to the sulfhydryl of the prosthetic group.</text>
</comment>
<comment type="similarity">
    <text evidence="1">Belongs to the acyl carrier protein (ACP) family.</text>
</comment>
<dbReference type="EMBL" id="AE015928">
    <property type="protein sequence ID" value="AAO78465.1"/>
    <property type="molecule type" value="Genomic_DNA"/>
</dbReference>
<dbReference type="RefSeq" id="NP_812271.1">
    <property type="nucleotide sequence ID" value="NC_004663.1"/>
</dbReference>
<dbReference type="RefSeq" id="WP_004291965.1">
    <property type="nucleotide sequence ID" value="NZ_UYXG01000003.1"/>
</dbReference>
<dbReference type="SMR" id="Q8A2E6"/>
<dbReference type="FunCoup" id="Q8A2E6">
    <property type="interactions" value="516"/>
</dbReference>
<dbReference type="STRING" id="226186.BT_3359"/>
<dbReference type="PaxDb" id="226186-BT_3359"/>
<dbReference type="EnsemblBacteria" id="AAO78465">
    <property type="protein sequence ID" value="AAO78465"/>
    <property type="gene ID" value="BT_3359"/>
</dbReference>
<dbReference type="KEGG" id="bth:BT_3359"/>
<dbReference type="PATRIC" id="fig|226186.12.peg.3427"/>
<dbReference type="eggNOG" id="COG0236">
    <property type="taxonomic scope" value="Bacteria"/>
</dbReference>
<dbReference type="HOGENOM" id="CLU_108696_5_1_10"/>
<dbReference type="InParanoid" id="Q8A2E6"/>
<dbReference type="OrthoDB" id="9804551at2"/>
<dbReference type="UniPathway" id="UPA00094"/>
<dbReference type="PRO" id="PR:Q8A2E6"/>
<dbReference type="Proteomes" id="UP000001414">
    <property type="component" value="Chromosome"/>
</dbReference>
<dbReference type="GO" id="GO:0005829">
    <property type="term" value="C:cytosol"/>
    <property type="evidence" value="ECO:0000318"/>
    <property type="project" value="GO_Central"/>
</dbReference>
<dbReference type="GO" id="GO:0016020">
    <property type="term" value="C:membrane"/>
    <property type="evidence" value="ECO:0007669"/>
    <property type="project" value="GOC"/>
</dbReference>
<dbReference type="GO" id="GO:0000035">
    <property type="term" value="F:acyl binding"/>
    <property type="evidence" value="ECO:0000318"/>
    <property type="project" value="GO_Central"/>
</dbReference>
<dbReference type="GO" id="GO:0000036">
    <property type="term" value="F:acyl carrier activity"/>
    <property type="evidence" value="ECO:0000318"/>
    <property type="project" value="GO_Central"/>
</dbReference>
<dbReference type="GO" id="GO:0031177">
    <property type="term" value="F:phosphopantetheine binding"/>
    <property type="evidence" value="ECO:0007669"/>
    <property type="project" value="InterPro"/>
</dbReference>
<dbReference type="GO" id="GO:0009245">
    <property type="term" value="P:lipid A biosynthetic process"/>
    <property type="evidence" value="ECO:0000318"/>
    <property type="project" value="GO_Central"/>
</dbReference>
<dbReference type="FunFam" id="1.10.1200.10:FF:000001">
    <property type="entry name" value="Acyl carrier protein"/>
    <property type="match status" value="1"/>
</dbReference>
<dbReference type="Gene3D" id="1.10.1200.10">
    <property type="entry name" value="ACP-like"/>
    <property type="match status" value="1"/>
</dbReference>
<dbReference type="HAMAP" id="MF_01217">
    <property type="entry name" value="Acyl_carrier"/>
    <property type="match status" value="1"/>
</dbReference>
<dbReference type="InterPro" id="IPR003231">
    <property type="entry name" value="ACP"/>
</dbReference>
<dbReference type="InterPro" id="IPR036736">
    <property type="entry name" value="ACP-like_sf"/>
</dbReference>
<dbReference type="InterPro" id="IPR020806">
    <property type="entry name" value="PKS_PP-bd"/>
</dbReference>
<dbReference type="InterPro" id="IPR009081">
    <property type="entry name" value="PP-bd_ACP"/>
</dbReference>
<dbReference type="InterPro" id="IPR006162">
    <property type="entry name" value="Ppantetheine_attach_site"/>
</dbReference>
<dbReference type="NCBIfam" id="TIGR00517">
    <property type="entry name" value="acyl_carrier"/>
    <property type="match status" value="1"/>
</dbReference>
<dbReference type="NCBIfam" id="NF002148">
    <property type="entry name" value="PRK00982.1-2"/>
    <property type="match status" value="1"/>
</dbReference>
<dbReference type="NCBIfam" id="NF002149">
    <property type="entry name" value="PRK00982.1-3"/>
    <property type="match status" value="1"/>
</dbReference>
<dbReference type="NCBIfam" id="NF002150">
    <property type="entry name" value="PRK00982.1-4"/>
    <property type="match status" value="1"/>
</dbReference>
<dbReference type="NCBIfam" id="NF002151">
    <property type="entry name" value="PRK00982.1-5"/>
    <property type="match status" value="1"/>
</dbReference>
<dbReference type="PANTHER" id="PTHR20863">
    <property type="entry name" value="ACYL CARRIER PROTEIN"/>
    <property type="match status" value="1"/>
</dbReference>
<dbReference type="PANTHER" id="PTHR20863:SF76">
    <property type="entry name" value="CARRIER DOMAIN-CONTAINING PROTEIN"/>
    <property type="match status" value="1"/>
</dbReference>
<dbReference type="Pfam" id="PF00550">
    <property type="entry name" value="PP-binding"/>
    <property type="match status" value="1"/>
</dbReference>
<dbReference type="SMART" id="SM00823">
    <property type="entry name" value="PKS_PP"/>
    <property type="match status" value="1"/>
</dbReference>
<dbReference type="SUPFAM" id="SSF47336">
    <property type="entry name" value="ACP-like"/>
    <property type="match status" value="1"/>
</dbReference>
<dbReference type="PROSITE" id="PS50075">
    <property type="entry name" value="CARRIER"/>
    <property type="match status" value="1"/>
</dbReference>
<dbReference type="PROSITE" id="PS00012">
    <property type="entry name" value="PHOSPHOPANTETHEINE"/>
    <property type="match status" value="1"/>
</dbReference>
<reference key="1">
    <citation type="journal article" date="2003" name="Science">
        <title>A genomic view of the human-Bacteroides thetaiotaomicron symbiosis.</title>
        <authorList>
            <person name="Xu J."/>
            <person name="Bjursell M.K."/>
            <person name="Himrod J."/>
            <person name="Deng S."/>
            <person name="Carmichael L.K."/>
            <person name="Chiang H.C."/>
            <person name="Hooper L.V."/>
            <person name="Gordon J.I."/>
        </authorList>
    </citation>
    <scope>NUCLEOTIDE SEQUENCE [LARGE SCALE GENOMIC DNA]</scope>
    <source>
        <strain>ATCC 29148 / DSM 2079 / JCM 5827 / CCUG 10774 / NCTC 10582 / VPI-5482 / E50</strain>
    </source>
</reference>
<name>ACP_BACTN</name>
<keyword id="KW-0963">Cytoplasm</keyword>
<keyword id="KW-0275">Fatty acid biosynthesis</keyword>
<keyword id="KW-0276">Fatty acid metabolism</keyword>
<keyword id="KW-0444">Lipid biosynthesis</keyword>
<keyword id="KW-0443">Lipid metabolism</keyword>
<keyword id="KW-0596">Phosphopantetheine</keyword>
<keyword id="KW-0597">Phosphoprotein</keyword>
<keyword id="KW-1185">Reference proteome</keyword>
<proteinExistence type="inferred from homology"/>
<accession>Q8A2E6</accession>
<evidence type="ECO:0000255" key="1">
    <source>
        <dbReference type="HAMAP-Rule" id="MF_01217"/>
    </source>
</evidence>
<evidence type="ECO:0000255" key="2">
    <source>
        <dbReference type="PROSITE-ProRule" id="PRU00258"/>
    </source>
</evidence>
<protein>
    <recommendedName>
        <fullName evidence="1">Acyl carrier protein</fullName>
        <shortName evidence="1">ACP</shortName>
    </recommendedName>
</protein>
<sequence>MSEIASRVKAIIVDKLGVEESEVTNEASFTNDLGADSLDTVELIMEFEKEFGISIPDDQAEKIGTVGDAVSYIEEHAK</sequence>
<gene>
    <name evidence="1" type="primary">acpP</name>
    <name type="ordered locus">BT_3359</name>
</gene>